<protein>
    <recommendedName>
        <fullName evidence="1">Large ribosomal subunit protein uL11</fullName>
    </recommendedName>
    <alternativeName>
        <fullName evidence="2">50S ribosomal protein L11</fullName>
    </alternativeName>
</protein>
<sequence length="145" mass="15507">MAKKVVGTIELMIPAQQASPSPPVGPALGQHGVNIMEFVKSFNAATAEMKPGTVVPVVITVYADRSFTFILKTPPASYLLKEAAGIKKGASDPKREKVGKVTKEQIREIAEIKMKDLNTEDIEAAMRIIAGTARSMGIEVEGLEA</sequence>
<feature type="chain" id="PRO_1000195685" description="Large ribosomal subunit protein uL11">
    <location>
        <begin position="1"/>
        <end position="145"/>
    </location>
</feature>
<organism>
    <name type="scientific">Persephonella marina (strain DSM 14350 / EX-H1)</name>
    <dbReference type="NCBI Taxonomy" id="123214"/>
    <lineage>
        <taxon>Bacteria</taxon>
        <taxon>Pseudomonadati</taxon>
        <taxon>Aquificota</taxon>
        <taxon>Aquificia</taxon>
        <taxon>Aquificales</taxon>
        <taxon>Hydrogenothermaceae</taxon>
        <taxon>Persephonella</taxon>
    </lineage>
</organism>
<accession>C0QQL2</accession>
<evidence type="ECO:0000255" key="1">
    <source>
        <dbReference type="HAMAP-Rule" id="MF_00736"/>
    </source>
</evidence>
<evidence type="ECO:0000305" key="2"/>
<proteinExistence type="inferred from homology"/>
<reference key="1">
    <citation type="journal article" date="2009" name="J. Bacteriol.">
        <title>Complete and draft genome sequences of six members of the Aquificales.</title>
        <authorList>
            <person name="Reysenbach A.-L."/>
            <person name="Hamamura N."/>
            <person name="Podar M."/>
            <person name="Griffiths E."/>
            <person name="Ferreira S."/>
            <person name="Hochstein R."/>
            <person name="Heidelberg J."/>
            <person name="Johnson J."/>
            <person name="Mead D."/>
            <person name="Pohorille A."/>
            <person name="Sarmiento M."/>
            <person name="Schweighofer K."/>
            <person name="Seshadri R."/>
            <person name="Voytek M.A."/>
        </authorList>
    </citation>
    <scope>NUCLEOTIDE SEQUENCE [LARGE SCALE GENOMIC DNA]</scope>
    <source>
        <strain>DSM 14350 / EX-H1</strain>
    </source>
</reference>
<name>RL11_PERMH</name>
<dbReference type="EMBL" id="CP001230">
    <property type="protein sequence ID" value="ACO04227.1"/>
    <property type="molecule type" value="Genomic_DNA"/>
</dbReference>
<dbReference type="RefSeq" id="WP_012676465.1">
    <property type="nucleotide sequence ID" value="NC_012440.1"/>
</dbReference>
<dbReference type="SMR" id="C0QQL2"/>
<dbReference type="STRING" id="123214.PERMA_1185"/>
<dbReference type="PaxDb" id="123214-PERMA_1185"/>
<dbReference type="KEGG" id="pmx:PERMA_1185"/>
<dbReference type="eggNOG" id="COG0080">
    <property type="taxonomic scope" value="Bacteria"/>
</dbReference>
<dbReference type="HOGENOM" id="CLU_074237_2_1_0"/>
<dbReference type="OrthoDB" id="9802408at2"/>
<dbReference type="Proteomes" id="UP000001366">
    <property type="component" value="Chromosome"/>
</dbReference>
<dbReference type="GO" id="GO:0022625">
    <property type="term" value="C:cytosolic large ribosomal subunit"/>
    <property type="evidence" value="ECO:0007669"/>
    <property type="project" value="TreeGrafter"/>
</dbReference>
<dbReference type="GO" id="GO:0070180">
    <property type="term" value="F:large ribosomal subunit rRNA binding"/>
    <property type="evidence" value="ECO:0007669"/>
    <property type="project" value="UniProtKB-UniRule"/>
</dbReference>
<dbReference type="GO" id="GO:0003735">
    <property type="term" value="F:structural constituent of ribosome"/>
    <property type="evidence" value="ECO:0007669"/>
    <property type="project" value="InterPro"/>
</dbReference>
<dbReference type="GO" id="GO:0006412">
    <property type="term" value="P:translation"/>
    <property type="evidence" value="ECO:0007669"/>
    <property type="project" value="UniProtKB-UniRule"/>
</dbReference>
<dbReference type="CDD" id="cd00349">
    <property type="entry name" value="Ribosomal_L11"/>
    <property type="match status" value="1"/>
</dbReference>
<dbReference type="FunFam" id="1.10.10.250:FF:000001">
    <property type="entry name" value="50S ribosomal protein L11"/>
    <property type="match status" value="1"/>
</dbReference>
<dbReference type="FunFam" id="3.30.1550.10:FF:000005">
    <property type="entry name" value="50S ribosomal protein L11"/>
    <property type="match status" value="1"/>
</dbReference>
<dbReference type="Gene3D" id="1.10.10.250">
    <property type="entry name" value="Ribosomal protein L11, C-terminal domain"/>
    <property type="match status" value="1"/>
</dbReference>
<dbReference type="Gene3D" id="3.30.1550.10">
    <property type="entry name" value="Ribosomal protein L11/L12, N-terminal domain"/>
    <property type="match status" value="1"/>
</dbReference>
<dbReference type="HAMAP" id="MF_00736">
    <property type="entry name" value="Ribosomal_uL11"/>
    <property type="match status" value="1"/>
</dbReference>
<dbReference type="InterPro" id="IPR000911">
    <property type="entry name" value="Ribosomal_uL11"/>
</dbReference>
<dbReference type="InterPro" id="IPR006519">
    <property type="entry name" value="Ribosomal_uL11_bac-typ"/>
</dbReference>
<dbReference type="InterPro" id="IPR020783">
    <property type="entry name" value="Ribosomal_uL11_C"/>
</dbReference>
<dbReference type="InterPro" id="IPR036769">
    <property type="entry name" value="Ribosomal_uL11_C_sf"/>
</dbReference>
<dbReference type="InterPro" id="IPR020785">
    <property type="entry name" value="Ribosomal_uL11_CS"/>
</dbReference>
<dbReference type="InterPro" id="IPR020784">
    <property type="entry name" value="Ribosomal_uL11_N"/>
</dbReference>
<dbReference type="InterPro" id="IPR036796">
    <property type="entry name" value="Ribosomal_uL11_N_sf"/>
</dbReference>
<dbReference type="NCBIfam" id="TIGR01632">
    <property type="entry name" value="L11_bact"/>
    <property type="match status" value="1"/>
</dbReference>
<dbReference type="PANTHER" id="PTHR11661">
    <property type="entry name" value="60S RIBOSOMAL PROTEIN L12"/>
    <property type="match status" value="1"/>
</dbReference>
<dbReference type="PANTHER" id="PTHR11661:SF1">
    <property type="entry name" value="LARGE RIBOSOMAL SUBUNIT PROTEIN UL11M"/>
    <property type="match status" value="1"/>
</dbReference>
<dbReference type="Pfam" id="PF00298">
    <property type="entry name" value="Ribosomal_L11"/>
    <property type="match status" value="1"/>
</dbReference>
<dbReference type="Pfam" id="PF03946">
    <property type="entry name" value="Ribosomal_L11_N"/>
    <property type="match status" value="1"/>
</dbReference>
<dbReference type="SMART" id="SM00649">
    <property type="entry name" value="RL11"/>
    <property type="match status" value="1"/>
</dbReference>
<dbReference type="SUPFAM" id="SSF54747">
    <property type="entry name" value="Ribosomal L11/L12e N-terminal domain"/>
    <property type="match status" value="1"/>
</dbReference>
<dbReference type="SUPFAM" id="SSF46906">
    <property type="entry name" value="Ribosomal protein L11, C-terminal domain"/>
    <property type="match status" value="1"/>
</dbReference>
<dbReference type="PROSITE" id="PS00359">
    <property type="entry name" value="RIBOSOMAL_L11"/>
    <property type="match status" value="1"/>
</dbReference>
<comment type="function">
    <text evidence="1">Forms part of the ribosomal stalk which helps the ribosome interact with GTP-bound translation factors.</text>
</comment>
<comment type="subunit">
    <text evidence="1">Part of the ribosomal stalk of the 50S ribosomal subunit. Interacts with L10 and the large rRNA to form the base of the stalk. L10 forms an elongated spine to which L12 dimers bind in a sequential fashion forming a multimeric L10(L12)X complex.</text>
</comment>
<comment type="PTM">
    <text evidence="1">One or more lysine residues are methylated.</text>
</comment>
<comment type="similarity">
    <text evidence="1">Belongs to the universal ribosomal protein uL11 family.</text>
</comment>
<keyword id="KW-0488">Methylation</keyword>
<keyword id="KW-1185">Reference proteome</keyword>
<keyword id="KW-0687">Ribonucleoprotein</keyword>
<keyword id="KW-0689">Ribosomal protein</keyword>
<keyword id="KW-0694">RNA-binding</keyword>
<keyword id="KW-0699">rRNA-binding</keyword>
<gene>
    <name evidence="1" type="primary">rplK</name>
    <name type="ordered locus">PERMA_1185</name>
</gene>